<accession>A2CCL0</accession>
<keyword id="KW-0997">Cell inner membrane</keyword>
<keyword id="KW-1003">Cell membrane</keyword>
<keyword id="KW-0169">Cobalamin biosynthesis</keyword>
<keyword id="KW-0460">Magnesium</keyword>
<keyword id="KW-0472">Membrane</keyword>
<keyword id="KW-0808">Transferase</keyword>
<keyword id="KW-0812">Transmembrane</keyword>
<keyword id="KW-1133">Transmembrane helix</keyword>
<sequence length="260" mass="27900">MRAPLWLRDLAGAWIFYSVLPAWPGLKPRFERIARFAPWIGLVLGGLQSFLWLVLIRADWPTSAVALLVIGLGAWLSGGLHLDGLMDTADGLAAGRERCLQAMDDSCVGASGVQALLVVVLLQIAALLRLGSLAPLALLIAAFWGRCAPLWAMARFFYLREGQAGSASFHRRYRQGWQEALPAFLVLLLALTVVPLLMIVGWPSQMVLMAGIGVGVLPAFLVPELLGRRLGGHSGDSYGASVVLVETITLLLLAVLLTAG</sequence>
<protein>
    <recommendedName>
        <fullName evidence="1">Adenosylcobinamide-GDP ribazoletransferase</fullName>
        <ecNumber evidence="1">2.7.8.26</ecNumber>
    </recommendedName>
    <alternativeName>
        <fullName evidence="1">Cobalamin synthase</fullName>
    </alternativeName>
    <alternativeName>
        <fullName evidence="1">Cobalamin-5'-phosphate synthase</fullName>
    </alternativeName>
</protein>
<name>COBS_PROM3</name>
<gene>
    <name evidence="1" type="primary">cobS</name>
    <name type="ordered locus">P9303_24891</name>
</gene>
<reference key="1">
    <citation type="journal article" date="2007" name="PLoS Genet.">
        <title>Patterns and implications of gene gain and loss in the evolution of Prochlorococcus.</title>
        <authorList>
            <person name="Kettler G.C."/>
            <person name="Martiny A.C."/>
            <person name="Huang K."/>
            <person name="Zucker J."/>
            <person name="Coleman M.L."/>
            <person name="Rodrigue S."/>
            <person name="Chen F."/>
            <person name="Lapidus A."/>
            <person name="Ferriera S."/>
            <person name="Johnson J."/>
            <person name="Steglich C."/>
            <person name="Church G.M."/>
            <person name="Richardson P."/>
            <person name="Chisholm S.W."/>
        </authorList>
    </citation>
    <scope>NUCLEOTIDE SEQUENCE [LARGE SCALE GENOMIC DNA]</scope>
    <source>
        <strain>MIT 9303</strain>
    </source>
</reference>
<proteinExistence type="inferred from homology"/>
<feature type="chain" id="PRO_1000083259" description="Adenosylcobinamide-GDP ribazoletransferase">
    <location>
        <begin position="1"/>
        <end position="260"/>
    </location>
</feature>
<feature type="transmembrane region" description="Helical" evidence="1">
    <location>
        <begin position="3"/>
        <end position="23"/>
    </location>
</feature>
<feature type="transmembrane region" description="Helical" evidence="1">
    <location>
        <begin position="36"/>
        <end position="56"/>
    </location>
</feature>
<feature type="transmembrane region" description="Helical" evidence="1">
    <location>
        <begin position="60"/>
        <end position="80"/>
    </location>
</feature>
<feature type="transmembrane region" description="Helical" evidence="1">
    <location>
        <begin position="108"/>
        <end position="128"/>
    </location>
</feature>
<feature type="transmembrane region" description="Helical" evidence="1">
    <location>
        <begin position="133"/>
        <end position="153"/>
    </location>
</feature>
<feature type="transmembrane region" description="Helical" evidence="1">
    <location>
        <begin position="180"/>
        <end position="200"/>
    </location>
</feature>
<feature type="transmembrane region" description="Helical" evidence="1">
    <location>
        <begin position="206"/>
        <end position="226"/>
    </location>
</feature>
<feature type="transmembrane region" description="Helical" evidence="1">
    <location>
        <begin position="239"/>
        <end position="259"/>
    </location>
</feature>
<comment type="function">
    <text evidence="1">Joins adenosylcobinamide-GDP and alpha-ribazole to generate adenosylcobalamin (Ado-cobalamin). Also synthesizes adenosylcobalamin 5'-phosphate from adenosylcobinamide-GDP and alpha-ribazole 5'-phosphate.</text>
</comment>
<comment type="catalytic activity">
    <reaction evidence="1">
        <text>alpha-ribazole + adenosylcob(III)inamide-GDP = adenosylcob(III)alamin + GMP + H(+)</text>
        <dbReference type="Rhea" id="RHEA:16049"/>
        <dbReference type="ChEBI" id="CHEBI:10329"/>
        <dbReference type="ChEBI" id="CHEBI:15378"/>
        <dbReference type="ChEBI" id="CHEBI:18408"/>
        <dbReference type="ChEBI" id="CHEBI:58115"/>
        <dbReference type="ChEBI" id="CHEBI:60487"/>
        <dbReference type="EC" id="2.7.8.26"/>
    </reaction>
</comment>
<comment type="catalytic activity">
    <reaction evidence="1">
        <text>alpha-ribazole 5'-phosphate + adenosylcob(III)inamide-GDP = adenosylcob(III)alamin 5'-phosphate + GMP + H(+)</text>
        <dbReference type="Rhea" id="RHEA:23560"/>
        <dbReference type="ChEBI" id="CHEBI:15378"/>
        <dbReference type="ChEBI" id="CHEBI:57918"/>
        <dbReference type="ChEBI" id="CHEBI:58115"/>
        <dbReference type="ChEBI" id="CHEBI:60487"/>
        <dbReference type="ChEBI" id="CHEBI:60493"/>
        <dbReference type="EC" id="2.7.8.26"/>
    </reaction>
</comment>
<comment type="cofactor">
    <cofactor evidence="1">
        <name>Mg(2+)</name>
        <dbReference type="ChEBI" id="CHEBI:18420"/>
    </cofactor>
</comment>
<comment type="pathway">
    <text evidence="1">Cofactor biosynthesis; adenosylcobalamin biosynthesis; adenosylcobalamin from cob(II)yrinate a,c-diamide: step 7/7.</text>
</comment>
<comment type="subcellular location">
    <subcellularLocation>
        <location evidence="1">Cell inner membrane</location>
        <topology evidence="1">Multi-pass membrane protein</topology>
    </subcellularLocation>
</comment>
<comment type="similarity">
    <text evidence="1">Belongs to the CobS family.</text>
</comment>
<organism>
    <name type="scientific">Prochlorococcus marinus (strain MIT 9303)</name>
    <dbReference type="NCBI Taxonomy" id="59922"/>
    <lineage>
        <taxon>Bacteria</taxon>
        <taxon>Bacillati</taxon>
        <taxon>Cyanobacteriota</taxon>
        <taxon>Cyanophyceae</taxon>
        <taxon>Synechococcales</taxon>
        <taxon>Prochlorococcaceae</taxon>
        <taxon>Prochlorococcus</taxon>
    </lineage>
</organism>
<evidence type="ECO:0000255" key="1">
    <source>
        <dbReference type="HAMAP-Rule" id="MF_00719"/>
    </source>
</evidence>
<dbReference type="EC" id="2.7.8.26" evidence="1"/>
<dbReference type="EMBL" id="CP000554">
    <property type="protein sequence ID" value="ABM79220.1"/>
    <property type="molecule type" value="Genomic_DNA"/>
</dbReference>
<dbReference type="RefSeq" id="WP_011827069.1">
    <property type="nucleotide sequence ID" value="NC_008820.1"/>
</dbReference>
<dbReference type="STRING" id="59922.P9303_24891"/>
<dbReference type="KEGG" id="pmf:P9303_24891"/>
<dbReference type="HOGENOM" id="CLU_057426_3_0_3"/>
<dbReference type="UniPathway" id="UPA00148">
    <property type="reaction ID" value="UER00238"/>
</dbReference>
<dbReference type="Proteomes" id="UP000002274">
    <property type="component" value="Chromosome"/>
</dbReference>
<dbReference type="GO" id="GO:0005886">
    <property type="term" value="C:plasma membrane"/>
    <property type="evidence" value="ECO:0007669"/>
    <property type="project" value="UniProtKB-SubCell"/>
</dbReference>
<dbReference type="GO" id="GO:0051073">
    <property type="term" value="F:adenosylcobinamide-GDP ribazoletransferase activity"/>
    <property type="evidence" value="ECO:0007669"/>
    <property type="project" value="UniProtKB-UniRule"/>
</dbReference>
<dbReference type="GO" id="GO:0008818">
    <property type="term" value="F:cobalamin 5'-phosphate synthase activity"/>
    <property type="evidence" value="ECO:0007669"/>
    <property type="project" value="UniProtKB-UniRule"/>
</dbReference>
<dbReference type="GO" id="GO:0009236">
    <property type="term" value="P:cobalamin biosynthetic process"/>
    <property type="evidence" value="ECO:0007669"/>
    <property type="project" value="UniProtKB-UniRule"/>
</dbReference>
<dbReference type="HAMAP" id="MF_00719">
    <property type="entry name" value="CobS"/>
    <property type="match status" value="1"/>
</dbReference>
<dbReference type="InterPro" id="IPR003805">
    <property type="entry name" value="CobS"/>
</dbReference>
<dbReference type="NCBIfam" id="TIGR00317">
    <property type="entry name" value="cobS"/>
    <property type="match status" value="1"/>
</dbReference>
<dbReference type="PANTHER" id="PTHR34148">
    <property type="entry name" value="ADENOSYLCOBINAMIDE-GDP RIBAZOLETRANSFERASE"/>
    <property type="match status" value="1"/>
</dbReference>
<dbReference type="PANTHER" id="PTHR34148:SF1">
    <property type="entry name" value="ADENOSYLCOBINAMIDE-GDP RIBAZOLETRANSFERASE"/>
    <property type="match status" value="1"/>
</dbReference>
<dbReference type="Pfam" id="PF02654">
    <property type="entry name" value="CobS"/>
    <property type="match status" value="1"/>
</dbReference>